<feature type="chain" id="PRO_1000096347" description="Phosphoglycerate kinase">
    <location>
        <begin position="1"/>
        <end position="398"/>
    </location>
</feature>
<feature type="binding site" evidence="1">
    <location>
        <begin position="21"/>
        <end position="23"/>
    </location>
    <ligand>
        <name>substrate</name>
    </ligand>
</feature>
<feature type="binding site" evidence="1">
    <location>
        <position position="37"/>
    </location>
    <ligand>
        <name>substrate</name>
    </ligand>
</feature>
<feature type="binding site" evidence="1">
    <location>
        <begin position="60"/>
        <end position="63"/>
    </location>
    <ligand>
        <name>substrate</name>
    </ligand>
</feature>
<feature type="binding site" evidence="1">
    <location>
        <position position="117"/>
    </location>
    <ligand>
        <name>substrate</name>
    </ligand>
</feature>
<feature type="binding site" evidence="1">
    <location>
        <position position="157"/>
    </location>
    <ligand>
        <name>substrate</name>
    </ligand>
</feature>
<feature type="binding site" evidence="1">
    <location>
        <position position="332"/>
    </location>
    <ligand>
        <name>ATP</name>
        <dbReference type="ChEBI" id="CHEBI:30616"/>
    </ligand>
</feature>
<feature type="binding site" evidence="1">
    <location>
        <begin position="357"/>
        <end position="360"/>
    </location>
    <ligand>
        <name>ATP</name>
        <dbReference type="ChEBI" id="CHEBI:30616"/>
    </ligand>
</feature>
<organism>
    <name type="scientific">Halobacterium salinarum (strain ATCC 29341 / DSM 671 / R1)</name>
    <dbReference type="NCBI Taxonomy" id="478009"/>
    <lineage>
        <taxon>Archaea</taxon>
        <taxon>Methanobacteriati</taxon>
        <taxon>Methanobacteriota</taxon>
        <taxon>Stenosarchaea group</taxon>
        <taxon>Halobacteria</taxon>
        <taxon>Halobacteriales</taxon>
        <taxon>Halobacteriaceae</taxon>
        <taxon>Halobacterium</taxon>
        <taxon>Halobacterium salinarum NRC-34001</taxon>
    </lineage>
</organism>
<reference key="1">
    <citation type="journal article" date="2008" name="Genomics">
        <title>Evolution in the laboratory: the genome of Halobacterium salinarum strain R1 compared to that of strain NRC-1.</title>
        <authorList>
            <person name="Pfeiffer F."/>
            <person name="Schuster S.C."/>
            <person name="Broicher A."/>
            <person name="Falb M."/>
            <person name="Palm P."/>
            <person name="Rodewald K."/>
            <person name="Ruepp A."/>
            <person name="Soppa J."/>
            <person name="Tittor J."/>
            <person name="Oesterhelt D."/>
        </authorList>
    </citation>
    <scope>NUCLEOTIDE SEQUENCE [LARGE SCALE GENOMIC DNA]</scope>
    <source>
        <strain>ATCC 29341 / DSM 671 / R1</strain>
    </source>
</reference>
<dbReference type="EC" id="2.7.2.3" evidence="1"/>
<dbReference type="EMBL" id="AM774415">
    <property type="protein sequence ID" value="CAP13864.1"/>
    <property type="molecule type" value="Genomic_DNA"/>
</dbReference>
<dbReference type="RefSeq" id="WP_010902880.1">
    <property type="nucleotide sequence ID" value="NC_010364.1"/>
</dbReference>
<dbReference type="SMR" id="B0R548"/>
<dbReference type="EnsemblBacteria" id="CAP13864">
    <property type="protein sequence ID" value="CAP13864"/>
    <property type="gene ID" value="OE_2745R"/>
</dbReference>
<dbReference type="GeneID" id="68693984"/>
<dbReference type="KEGG" id="hsl:OE_2745R"/>
<dbReference type="HOGENOM" id="CLU_025427_0_2_2"/>
<dbReference type="PhylomeDB" id="B0R548"/>
<dbReference type="UniPathway" id="UPA00109">
    <property type="reaction ID" value="UER00185"/>
</dbReference>
<dbReference type="Proteomes" id="UP000001321">
    <property type="component" value="Chromosome"/>
</dbReference>
<dbReference type="GO" id="GO:0005829">
    <property type="term" value="C:cytosol"/>
    <property type="evidence" value="ECO:0007669"/>
    <property type="project" value="TreeGrafter"/>
</dbReference>
<dbReference type="GO" id="GO:0043531">
    <property type="term" value="F:ADP binding"/>
    <property type="evidence" value="ECO:0007669"/>
    <property type="project" value="TreeGrafter"/>
</dbReference>
<dbReference type="GO" id="GO:0005524">
    <property type="term" value="F:ATP binding"/>
    <property type="evidence" value="ECO:0007669"/>
    <property type="project" value="UniProtKB-KW"/>
</dbReference>
<dbReference type="GO" id="GO:0004618">
    <property type="term" value="F:phosphoglycerate kinase activity"/>
    <property type="evidence" value="ECO:0007669"/>
    <property type="project" value="UniProtKB-UniRule"/>
</dbReference>
<dbReference type="GO" id="GO:0006094">
    <property type="term" value="P:gluconeogenesis"/>
    <property type="evidence" value="ECO:0007669"/>
    <property type="project" value="TreeGrafter"/>
</dbReference>
<dbReference type="GO" id="GO:0006096">
    <property type="term" value="P:glycolytic process"/>
    <property type="evidence" value="ECO:0007669"/>
    <property type="project" value="UniProtKB-UniRule"/>
</dbReference>
<dbReference type="FunFam" id="3.40.50.1260:FF:000006">
    <property type="entry name" value="Phosphoglycerate kinase"/>
    <property type="match status" value="1"/>
</dbReference>
<dbReference type="FunFam" id="3.40.50.1260:FF:000012">
    <property type="entry name" value="Phosphoglycerate kinase"/>
    <property type="match status" value="1"/>
</dbReference>
<dbReference type="Gene3D" id="3.40.50.1260">
    <property type="entry name" value="Phosphoglycerate kinase, N-terminal domain"/>
    <property type="match status" value="2"/>
</dbReference>
<dbReference type="HAMAP" id="MF_00145">
    <property type="entry name" value="Phosphoglyc_kinase"/>
    <property type="match status" value="1"/>
</dbReference>
<dbReference type="InterPro" id="IPR001576">
    <property type="entry name" value="Phosphoglycerate_kinase"/>
</dbReference>
<dbReference type="InterPro" id="IPR015824">
    <property type="entry name" value="Phosphoglycerate_kinase_N"/>
</dbReference>
<dbReference type="InterPro" id="IPR036043">
    <property type="entry name" value="Phosphoglycerate_kinase_sf"/>
</dbReference>
<dbReference type="PANTHER" id="PTHR11406">
    <property type="entry name" value="PHOSPHOGLYCERATE KINASE"/>
    <property type="match status" value="1"/>
</dbReference>
<dbReference type="PANTHER" id="PTHR11406:SF23">
    <property type="entry name" value="PHOSPHOGLYCERATE KINASE 1, CHLOROPLASTIC-RELATED"/>
    <property type="match status" value="1"/>
</dbReference>
<dbReference type="Pfam" id="PF00162">
    <property type="entry name" value="PGK"/>
    <property type="match status" value="1"/>
</dbReference>
<dbReference type="PIRSF" id="PIRSF000724">
    <property type="entry name" value="Pgk"/>
    <property type="match status" value="1"/>
</dbReference>
<dbReference type="PRINTS" id="PR00477">
    <property type="entry name" value="PHGLYCKINASE"/>
</dbReference>
<dbReference type="SUPFAM" id="SSF53748">
    <property type="entry name" value="Phosphoglycerate kinase"/>
    <property type="match status" value="1"/>
</dbReference>
<keyword id="KW-0067">ATP-binding</keyword>
<keyword id="KW-0963">Cytoplasm</keyword>
<keyword id="KW-0324">Glycolysis</keyword>
<keyword id="KW-0418">Kinase</keyword>
<keyword id="KW-0547">Nucleotide-binding</keyword>
<keyword id="KW-0808">Transferase</keyword>
<proteinExistence type="inferred from homology"/>
<evidence type="ECO:0000255" key="1">
    <source>
        <dbReference type="HAMAP-Rule" id="MF_00145"/>
    </source>
</evidence>
<gene>
    <name evidence="1" type="primary">pgk</name>
    <name type="ordered locus">OE_2745R</name>
</gene>
<protein>
    <recommendedName>
        <fullName evidence="1">Phosphoglycerate kinase</fullName>
        <ecNumber evidence="1">2.7.2.3</ecNumber>
    </recommendedName>
</protein>
<accession>B0R548</accession>
<name>PGK_HALS3</name>
<sequence>MAIRTLDDLAAANRAIGVRVDINSPLTAAGGLADDARLRAHVDTLAELLAADARVAVLAHQGRPGGDEFARLERHADRLDALLDAPVSYCDATFSTGARDAVADLAPGEAVVLENTRFYSEEYMAFAPERAADTALVDGLAPALDAYVNDAFAAAHRSQPSLVGFPEVLPSYAGRVMEAELDALSGVADTPTPRTYVVGGAKVPDSVEVAAHALSHGLADNVLVTGVVANVFLAATGVDLGRASTDFIHERDYGTEIARAADLLAAHNDALHLPVDVAVERDGARCELSTDALPPAGDEAVCDIGSDTVDAYADVLADSETVVVNGPAGVFEDDLFADGTRGVFDAASEVEHSIVGGGDTAAAIRRFDITGFDHVSTGGGAAINLLTDADLPAVAALR</sequence>
<comment type="catalytic activity">
    <reaction evidence="1">
        <text>(2R)-3-phosphoglycerate + ATP = (2R)-3-phospho-glyceroyl phosphate + ADP</text>
        <dbReference type="Rhea" id="RHEA:14801"/>
        <dbReference type="ChEBI" id="CHEBI:30616"/>
        <dbReference type="ChEBI" id="CHEBI:57604"/>
        <dbReference type="ChEBI" id="CHEBI:58272"/>
        <dbReference type="ChEBI" id="CHEBI:456216"/>
        <dbReference type="EC" id="2.7.2.3"/>
    </reaction>
</comment>
<comment type="pathway">
    <text evidence="1">Carbohydrate degradation; glycolysis; pyruvate from D-glyceraldehyde 3-phosphate: step 2/5.</text>
</comment>
<comment type="subunit">
    <text evidence="1">Monomer.</text>
</comment>
<comment type="subcellular location">
    <subcellularLocation>
        <location evidence="1">Cytoplasm</location>
    </subcellularLocation>
</comment>
<comment type="similarity">
    <text evidence="1">Belongs to the phosphoglycerate kinase family.</text>
</comment>